<name>RL28_SHELP</name>
<keyword id="KW-1185">Reference proteome</keyword>
<keyword id="KW-0687">Ribonucleoprotein</keyword>
<keyword id="KW-0689">Ribosomal protein</keyword>
<sequence length="78" mass="9117">MSRVCQVTGKKPMVGNNRSHAKNATRRRFLPNLQNHRFWLEDEKRFVQLRVSTKGMRIIDKKGIEVVVAELRARGEKV</sequence>
<protein>
    <recommendedName>
        <fullName evidence="1">Large ribosomal subunit protein bL28</fullName>
    </recommendedName>
    <alternativeName>
        <fullName evidence="3">50S ribosomal protein L28</fullName>
    </alternativeName>
</protein>
<proteinExistence type="inferred from homology"/>
<accession>A3QIP8</accession>
<organism>
    <name type="scientific">Shewanella loihica (strain ATCC BAA-1088 / PV-4)</name>
    <dbReference type="NCBI Taxonomy" id="323850"/>
    <lineage>
        <taxon>Bacteria</taxon>
        <taxon>Pseudomonadati</taxon>
        <taxon>Pseudomonadota</taxon>
        <taxon>Gammaproteobacteria</taxon>
        <taxon>Alteromonadales</taxon>
        <taxon>Shewanellaceae</taxon>
        <taxon>Shewanella</taxon>
    </lineage>
</organism>
<feature type="chain" id="PRO_1000007349" description="Large ribosomal subunit protein bL28">
    <location>
        <begin position="1"/>
        <end position="78"/>
    </location>
</feature>
<feature type="region of interest" description="Disordered" evidence="2">
    <location>
        <begin position="1"/>
        <end position="21"/>
    </location>
</feature>
<dbReference type="EMBL" id="CP000606">
    <property type="protein sequence ID" value="ABO25346.1"/>
    <property type="molecule type" value="Genomic_DNA"/>
</dbReference>
<dbReference type="RefSeq" id="WP_011867275.1">
    <property type="nucleotide sequence ID" value="NC_009092.1"/>
</dbReference>
<dbReference type="SMR" id="A3QIP8"/>
<dbReference type="STRING" id="323850.Shew_3480"/>
<dbReference type="KEGG" id="slo:Shew_3480"/>
<dbReference type="eggNOG" id="COG0227">
    <property type="taxonomic scope" value="Bacteria"/>
</dbReference>
<dbReference type="HOGENOM" id="CLU_064548_3_1_6"/>
<dbReference type="OrthoDB" id="9805609at2"/>
<dbReference type="Proteomes" id="UP000001558">
    <property type="component" value="Chromosome"/>
</dbReference>
<dbReference type="GO" id="GO:0022625">
    <property type="term" value="C:cytosolic large ribosomal subunit"/>
    <property type="evidence" value="ECO:0007669"/>
    <property type="project" value="TreeGrafter"/>
</dbReference>
<dbReference type="GO" id="GO:0003735">
    <property type="term" value="F:structural constituent of ribosome"/>
    <property type="evidence" value="ECO:0007669"/>
    <property type="project" value="InterPro"/>
</dbReference>
<dbReference type="GO" id="GO:0006412">
    <property type="term" value="P:translation"/>
    <property type="evidence" value="ECO:0007669"/>
    <property type="project" value="UniProtKB-UniRule"/>
</dbReference>
<dbReference type="FunFam" id="2.30.170.40:FF:000001">
    <property type="entry name" value="50S ribosomal protein L28"/>
    <property type="match status" value="1"/>
</dbReference>
<dbReference type="Gene3D" id="2.30.170.40">
    <property type="entry name" value="Ribosomal protein L28/L24"/>
    <property type="match status" value="1"/>
</dbReference>
<dbReference type="HAMAP" id="MF_00373">
    <property type="entry name" value="Ribosomal_bL28"/>
    <property type="match status" value="1"/>
</dbReference>
<dbReference type="InterPro" id="IPR026569">
    <property type="entry name" value="Ribosomal_bL28"/>
</dbReference>
<dbReference type="InterPro" id="IPR034704">
    <property type="entry name" value="Ribosomal_bL28/bL31-like_sf"/>
</dbReference>
<dbReference type="InterPro" id="IPR001383">
    <property type="entry name" value="Ribosomal_bL28_bact-type"/>
</dbReference>
<dbReference type="InterPro" id="IPR037147">
    <property type="entry name" value="Ribosomal_bL28_sf"/>
</dbReference>
<dbReference type="NCBIfam" id="TIGR00009">
    <property type="entry name" value="L28"/>
    <property type="match status" value="1"/>
</dbReference>
<dbReference type="PANTHER" id="PTHR13528">
    <property type="entry name" value="39S RIBOSOMAL PROTEIN L28, MITOCHONDRIAL"/>
    <property type="match status" value="1"/>
</dbReference>
<dbReference type="PANTHER" id="PTHR13528:SF2">
    <property type="entry name" value="LARGE RIBOSOMAL SUBUNIT PROTEIN BL28M"/>
    <property type="match status" value="1"/>
</dbReference>
<dbReference type="Pfam" id="PF00830">
    <property type="entry name" value="Ribosomal_L28"/>
    <property type="match status" value="1"/>
</dbReference>
<dbReference type="SUPFAM" id="SSF143800">
    <property type="entry name" value="L28p-like"/>
    <property type="match status" value="1"/>
</dbReference>
<comment type="similarity">
    <text evidence="1">Belongs to the bacterial ribosomal protein bL28 family.</text>
</comment>
<reference key="1">
    <citation type="submission" date="2007-03" db="EMBL/GenBank/DDBJ databases">
        <title>Complete sequence of Shewanella loihica PV-4.</title>
        <authorList>
            <consortium name="US DOE Joint Genome Institute"/>
            <person name="Copeland A."/>
            <person name="Lucas S."/>
            <person name="Lapidus A."/>
            <person name="Barry K."/>
            <person name="Detter J.C."/>
            <person name="Glavina del Rio T."/>
            <person name="Hammon N."/>
            <person name="Israni S."/>
            <person name="Dalin E."/>
            <person name="Tice H."/>
            <person name="Pitluck S."/>
            <person name="Chain P."/>
            <person name="Malfatti S."/>
            <person name="Shin M."/>
            <person name="Vergez L."/>
            <person name="Schmutz J."/>
            <person name="Larimer F."/>
            <person name="Land M."/>
            <person name="Hauser L."/>
            <person name="Kyrpides N."/>
            <person name="Mikhailova N."/>
            <person name="Romine M.F."/>
            <person name="Serres G."/>
            <person name="Fredrickson J."/>
            <person name="Tiedje J."/>
            <person name="Richardson P."/>
        </authorList>
    </citation>
    <scope>NUCLEOTIDE SEQUENCE [LARGE SCALE GENOMIC DNA]</scope>
    <source>
        <strain>ATCC BAA-1088 / PV-4</strain>
    </source>
</reference>
<evidence type="ECO:0000255" key="1">
    <source>
        <dbReference type="HAMAP-Rule" id="MF_00373"/>
    </source>
</evidence>
<evidence type="ECO:0000256" key="2">
    <source>
        <dbReference type="SAM" id="MobiDB-lite"/>
    </source>
</evidence>
<evidence type="ECO:0000305" key="3"/>
<gene>
    <name evidence="1" type="primary">rpmB</name>
    <name type="ordered locus">Shew_3480</name>
</gene>